<dbReference type="GO" id="GO:0005576">
    <property type="term" value="C:extracellular region"/>
    <property type="evidence" value="ECO:0007669"/>
    <property type="project" value="UniProtKB-SubCell"/>
</dbReference>
<dbReference type="GO" id="GO:0042151">
    <property type="term" value="C:nematocyst"/>
    <property type="evidence" value="ECO:0007669"/>
    <property type="project" value="UniProtKB-SubCell"/>
</dbReference>
<dbReference type="GO" id="GO:0090729">
    <property type="term" value="F:toxin activity"/>
    <property type="evidence" value="ECO:0007669"/>
    <property type="project" value="UniProtKB-KW"/>
</dbReference>
<sequence length="53" mass="5650">MMIKVLLLLSSALVLFTPEAEGGCGCHTECSLQCSFSGCGYVCGLRCRCSWGK</sequence>
<keyword id="KW-0027">Amidation</keyword>
<keyword id="KW-1015">Disulfide bond</keyword>
<keyword id="KW-0166">Nematocyst</keyword>
<keyword id="KW-0528">Neurotoxin</keyword>
<keyword id="KW-0964">Secreted</keyword>
<keyword id="KW-0732">Signal</keyword>
<keyword id="KW-0800">Toxin</keyword>
<comment type="function">
    <text evidence="2">In vivo, only causes a weak change in behavior in shrimps (C.multidentata) (slight twitching of the walking legs), but no lethal effect is observed. No activity is observed when injected into fly larvae (M.domestica).</text>
</comment>
<comment type="subcellular location">
    <subcellularLocation>
        <location evidence="5">Secreted</location>
    </subcellularLocation>
    <subcellularLocation>
        <location evidence="4">Nematocyst</location>
    </subcellularLocation>
</comment>
<comment type="PTM">
    <text evidence="4">Contains 4 disulfide bonds.</text>
</comment>
<comment type="caution">
    <text evidence="5">Toxicity tests have been done on recombinant non-amidated toxin. The sequence shown in supplementary table 3 is longer than the sequence shown here.</text>
</comment>
<organism>
    <name type="scientific">Epiactis japonica</name>
    <name type="common">Sea anemone</name>
    <name type="synonym">Cnidopus japonicus</name>
    <dbReference type="NCBI Taxonomy" id="58804"/>
    <lineage>
        <taxon>Eukaryota</taxon>
        <taxon>Metazoa</taxon>
        <taxon>Cnidaria</taxon>
        <taxon>Anthozoa</taxon>
        <taxon>Hexacorallia</taxon>
        <taxon>Actiniaria</taxon>
        <taxon>Actiniidae</taxon>
        <taxon>Epiactis</taxon>
    </lineage>
</organism>
<accession>P0DPE7</accession>
<reference key="1">
    <citation type="journal article" date="2017" name="Sci. Rep.">
        <title>Identification of unusual peptides with new Cys frameworks in the venom of the cold-water sea anemone Cnidopus japonicus.</title>
        <authorList>
            <person name="Babenko V.V."/>
            <person name="Mikov A.N."/>
            <person name="Manuvera V.A."/>
            <person name="Anikanov N.A."/>
            <person name="Kovalchuk S.I."/>
            <person name="Andreev Y.A."/>
            <person name="Logashina Y.A."/>
            <person name="Kornilov D.A."/>
            <person name="Manolov A.I."/>
            <person name="Sanamyan N.P."/>
            <person name="Sanamyan K.E."/>
            <person name="Kostryukova E.S."/>
            <person name="Kozlov S.A."/>
            <person name="Grishin E.V."/>
            <person name="Govorun V.M."/>
            <person name="Lazarev V.N."/>
        </authorList>
    </citation>
    <scope>NUCLEOTIDE SEQUENCE [MRNA]</scope>
    <scope>FUNCTION</scope>
    <scope>BIOASSAY</scope>
</reference>
<name>CJTL7_EPIJA</name>
<evidence type="ECO:0000255" key="1"/>
<evidence type="ECO:0000269" key="2">
    <source>
    </source>
</evidence>
<evidence type="ECO:0000303" key="3">
    <source>
    </source>
</evidence>
<evidence type="ECO:0000305" key="4"/>
<evidence type="ECO:0000305" key="5">
    <source>
    </source>
</evidence>
<protein>
    <recommendedName>
        <fullName evidence="3">Toxin CjTL7</fullName>
    </recommendedName>
</protein>
<proteinExistence type="inferred from homology"/>
<feature type="signal peptide" evidence="1">
    <location>
        <begin position="1"/>
        <end position="22"/>
    </location>
</feature>
<feature type="peptide" id="PRO_0000443397" description="Toxin CjTL7">
    <location>
        <begin position="23"/>
        <end position="51"/>
    </location>
</feature>
<feature type="modified residue" description="Tryptophan amide" evidence="4">
    <location>
        <position position="51"/>
    </location>
</feature>